<feature type="chain" id="PRO_1000139330" description="GTP 3',8-cyclase">
    <location>
        <begin position="1"/>
        <end position="329"/>
    </location>
</feature>
<feature type="domain" description="Radical SAM core" evidence="2">
    <location>
        <begin position="8"/>
        <end position="234"/>
    </location>
</feature>
<feature type="binding site" evidence="1">
    <location>
        <position position="17"/>
    </location>
    <ligand>
        <name>GTP</name>
        <dbReference type="ChEBI" id="CHEBI:37565"/>
    </ligand>
</feature>
<feature type="binding site" evidence="1">
    <location>
        <position position="24"/>
    </location>
    <ligand>
        <name>[4Fe-4S] cluster</name>
        <dbReference type="ChEBI" id="CHEBI:49883"/>
        <label>1</label>
        <note>4Fe-4S-S-AdoMet</note>
    </ligand>
</feature>
<feature type="binding site" evidence="1">
    <location>
        <position position="28"/>
    </location>
    <ligand>
        <name>[4Fe-4S] cluster</name>
        <dbReference type="ChEBI" id="CHEBI:49883"/>
        <label>1</label>
        <note>4Fe-4S-S-AdoMet</note>
    </ligand>
</feature>
<feature type="binding site" evidence="1">
    <location>
        <position position="30"/>
    </location>
    <ligand>
        <name>S-adenosyl-L-methionine</name>
        <dbReference type="ChEBI" id="CHEBI:59789"/>
    </ligand>
</feature>
<feature type="binding site" evidence="1">
    <location>
        <position position="31"/>
    </location>
    <ligand>
        <name>[4Fe-4S] cluster</name>
        <dbReference type="ChEBI" id="CHEBI:49883"/>
        <label>1</label>
        <note>4Fe-4S-S-AdoMet</note>
    </ligand>
</feature>
<feature type="binding site" evidence="1">
    <location>
        <position position="68"/>
    </location>
    <ligand>
        <name>GTP</name>
        <dbReference type="ChEBI" id="CHEBI:37565"/>
    </ligand>
</feature>
<feature type="binding site" evidence="1">
    <location>
        <position position="72"/>
    </location>
    <ligand>
        <name>S-adenosyl-L-methionine</name>
        <dbReference type="ChEBI" id="CHEBI:59789"/>
    </ligand>
</feature>
<feature type="binding site" evidence="1">
    <location>
        <position position="99"/>
    </location>
    <ligand>
        <name>GTP</name>
        <dbReference type="ChEBI" id="CHEBI:37565"/>
    </ligand>
</feature>
<feature type="binding site" evidence="1">
    <location>
        <position position="123"/>
    </location>
    <ligand>
        <name>S-adenosyl-L-methionine</name>
        <dbReference type="ChEBI" id="CHEBI:59789"/>
    </ligand>
</feature>
<feature type="binding site" evidence="1">
    <location>
        <position position="160"/>
    </location>
    <ligand>
        <name>GTP</name>
        <dbReference type="ChEBI" id="CHEBI:37565"/>
    </ligand>
</feature>
<feature type="binding site" evidence="1">
    <location>
        <position position="194"/>
    </location>
    <ligand>
        <name>S-adenosyl-L-methionine</name>
        <dbReference type="ChEBI" id="CHEBI:59789"/>
    </ligand>
</feature>
<feature type="binding site" evidence="1">
    <location>
        <position position="257"/>
    </location>
    <ligand>
        <name>[4Fe-4S] cluster</name>
        <dbReference type="ChEBI" id="CHEBI:49883"/>
        <label>2</label>
        <note>4Fe-4S-substrate</note>
    </ligand>
</feature>
<feature type="binding site" evidence="1">
    <location>
        <position position="260"/>
    </location>
    <ligand>
        <name>[4Fe-4S] cluster</name>
        <dbReference type="ChEBI" id="CHEBI:49883"/>
        <label>2</label>
        <note>4Fe-4S-substrate</note>
    </ligand>
</feature>
<feature type="binding site" evidence="1">
    <location>
        <begin position="262"/>
        <end position="264"/>
    </location>
    <ligand>
        <name>GTP</name>
        <dbReference type="ChEBI" id="CHEBI:37565"/>
    </ligand>
</feature>
<feature type="binding site" evidence="1">
    <location>
        <position position="274"/>
    </location>
    <ligand>
        <name>[4Fe-4S] cluster</name>
        <dbReference type="ChEBI" id="CHEBI:49883"/>
        <label>2</label>
        <note>4Fe-4S-substrate</note>
    </ligand>
</feature>
<accession>B5XYW6</accession>
<reference key="1">
    <citation type="journal article" date="2008" name="PLoS Genet.">
        <title>Complete genome sequence of the N2-fixing broad host range endophyte Klebsiella pneumoniae 342 and virulence predictions verified in mice.</title>
        <authorList>
            <person name="Fouts D.E."/>
            <person name="Tyler H.L."/>
            <person name="DeBoy R.T."/>
            <person name="Daugherty S."/>
            <person name="Ren Q."/>
            <person name="Badger J.H."/>
            <person name="Durkin A.S."/>
            <person name="Huot H."/>
            <person name="Shrivastava S."/>
            <person name="Kothari S."/>
            <person name="Dodson R.J."/>
            <person name="Mohamoud Y."/>
            <person name="Khouri H."/>
            <person name="Roesch L.F.W."/>
            <person name="Krogfelt K.A."/>
            <person name="Struve C."/>
            <person name="Triplett E.W."/>
            <person name="Methe B.A."/>
        </authorList>
    </citation>
    <scope>NUCLEOTIDE SEQUENCE [LARGE SCALE GENOMIC DNA]</scope>
    <source>
        <strain>342</strain>
    </source>
</reference>
<keyword id="KW-0004">4Fe-4S</keyword>
<keyword id="KW-0342">GTP-binding</keyword>
<keyword id="KW-0408">Iron</keyword>
<keyword id="KW-0411">Iron-sulfur</keyword>
<keyword id="KW-0456">Lyase</keyword>
<keyword id="KW-0479">Metal-binding</keyword>
<keyword id="KW-0501">Molybdenum cofactor biosynthesis</keyword>
<keyword id="KW-0547">Nucleotide-binding</keyword>
<keyword id="KW-0949">S-adenosyl-L-methionine</keyword>
<name>MOAA_KLEP3</name>
<comment type="function">
    <text evidence="1">Catalyzes the cyclization of GTP to (8S)-3',8-cyclo-7,8-dihydroguanosine 5'-triphosphate.</text>
</comment>
<comment type="catalytic activity">
    <reaction evidence="1">
        <text>GTP + AH2 + S-adenosyl-L-methionine = (8S)-3',8-cyclo-7,8-dihydroguanosine 5'-triphosphate + 5'-deoxyadenosine + L-methionine + A + H(+)</text>
        <dbReference type="Rhea" id="RHEA:49576"/>
        <dbReference type="ChEBI" id="CHEBI:13193"/>
        <dbReference type="ChEBI" id="CHEBI:15378"/>
        <dbReference type="ChEBI" id="CHEBI:17319"/>
        <dbReference type="ChEBI" id="CHEBI:17499"/>
        <dbReference type="ChEBI" id="CHEBI:37565"/>
        <dbReference type="ChEBI" id="CHEBI:57844"/>
        <dbReference type="ChEBI" id="CHEBI:59789"/>
        <dbReference type="ChEBI" id="CHEBI:131766"/>
        <dbReference type="EC" id="4.1.99.22"/>
    </reaction>
</comment>
<comment type="cofactor">
    <cofactor evidence="1">
        <name>[4Fe-4S] cluster</name>
        <dbReference type="ChEBI" id="CHEBI:49883"/>
    </cofactor>
    <text evidence="1">Binds 2 [4Fe-4S] clusters. Binds 1 [4Fe-4S] cluster coordinated with 3 cysteines and an exchangeable S-adenosyl-L-methionine and 1 [4Fe-4S] cluster coordinated with 3 cysteines and the GTP-derived substrate.</text>
</comment>
<comment type="pathway">
    <text evidence="1">Cofactor biosynthesis; molybdopterin biosynthesis.</text>
</comment>
<comment type="subunit">
    <text evidence="1">Monomer and homodimer.</text>
</comment>
<comment type="similarity">
    <text evidence="1">Belongs to the radical SAM superfamily. MoaA family.</text>
</comment>
<organism>
    <name type="scientific">Klebsiella pneumoniae (strain 342)</name>
    <dbReference type="NCBI Taxonomy" id="507522"/>
    <lineage>
        <taxon>Bacteria</taxon>
        <taxon>Pseudomonadati</taxon>
        <taxon>Pseudomonadota</taxon>
        <taxon>Gammaproteobacteria</taxon>
        <taxon>Enterobacterales</taxon>
        <taxon>Enterobacteriaceae</taxon>
        <taxon>Klebsiella/Raoultella group</taxon>
        <taxon>Klebsiella</taxon>
        <taxon>Klebsiella pneumoniae complex</taxon>
    </lineage>
</organism>
<sequence>MASQLTDAFARKFFYLRLSITDVCNFRCTYCLPDGYKPGAVNNNGFLSVDEVRRVTRAFSALGTEKVRLTGGEPSLRRDFTEIIAAVRENPAIRQIAVTTNGYRLARDVERWRDAGLTAINVSVDSLDARQFHAITGQDKFHQVMDGIDAAFAAGFDKVKVNTVLMRDVNHHQLDTFLAWIQPRRIQLRFIELMETGEGSDLFRRHHLSGMVLRDELLRRGWIHQIRQRSDGPAQVFCHPDYAGEIGLIMPYEKDFCATCNRLRVSSVGKLHLCLFGEGGVDLRDLMVEDEQQAELEARIAEALTHKKQTHFLHQGNTGITQNLSYIGG</sequence>
<gene>
    <name evidence="1" type="primary">moaA</name>
    <name type="ordered locus">KPK_3762</name>
</gene>
<protein>
    <recommendedName>
        <fullName evidence="1">GTP 3',8-cyclase</fullName>
        <ecNumber evidence="1">4.1.99.22</ecNumber>
    </recommendedName>
    <alternativeName>
        <fullName evidence="1">Molybdenum cofactor biosynthesis protein A</fullName>
    </alternativeName>
</protein>
<dbReference type="EC" id="4.1.99.22" evidence="1"/>
<dbReference type="EMBL" id="CP000964">
    <property type="protein sequence ID" value="ACI10554.1"/>
    <property type="molecule type" value="Genomic_DNA"/>
</dbReference>
<dbReference type="SMR" id="B5XYW6"/>
<dbReference type="KEGG" id="kpe:KPK_3762"/>
<dbReference type="HOGENOM" id="CLU_009273_0_1_6"/>
<dbReference type="UniPathway" id="UPA00344"/>
<dbReference type="Proteomes" id="UP000001734">
    <property type="component" value="Chromosome"/>
</dbReference>
<dbReference type="GO" id="GO:0051539">
    <property type="term" value="F:4 iron, 4 sulfur cluster binding"/>
    <property type="evidence" value="ECO:0007669"/>
    <property type="project" value="UniProtKB-UniRule"/>
</dbReference>
<dbReference type="GO" id="GO:0061799">
    <property type="term" value="F:cyclic pyranopterin monophosphate synthase activity"/>
    <property type="evidence" value="ECO:0007669"/>
    <property type="project" value="TreeGrafter"/>
</dbReference>
<dbReference type="GO" id="GO:0061798">
    <property type="term" value="F:GTP 3',8'-cyclase activity"/>
    <property type="evidence" value="ECO:0007669"/>
    <property type="project" value="UniProtKB-UniRule"/>
</dbReference>
<dbReference type="GO" id="GO:0005525">
    <property type="term" value="F:GTP binding"/>
    <property type="evidence" value="ECO:0007669"/>
    <property type="project" value="UniProtKB-UniRule"/>
</dbReference>
<dbReference type="GO" id="GO:0046872">
    <property type="term" value="F:metal ion binding"/>
    <property type="evidence" value="ECO:0007669"/>
    <property type="project" value="UniProtKB-KW"/>
</dbReference>
<dbReference type="GO" id="GO:1904047">
    <property type="term" value="F:S-adenosyl-L-methionine binding"/>
    <property type="evidence" value="ECO:0007669"/>
    <property type="project" value="UniProtKB-UniRule"/>
</dbReference>
<dbReference type="GO" id="GO:0006777">
    <property type="term" value="P:Mo-molybdopterin cofactor biosynthetic process"/>
    <property type="evidence" value="ECO:0007669"/>
    <property type="project" value="UniProtKB-UniRule"/>
</dbReference>
<dbReference type="CDD" id="cd01335">
    <property type="entry name" value="Radical_SAM"/>
    <property type="match status" value="1"/>
</dbReference>
<dbReference type="CDD" id="cd21117">
    <property type="entry name" value="Twitch_MoaA"/>
    <property type="match status" value="1"/>
</dbReference>
<dbReference type="FunFam" id="3.20.20.70:FF:000057">
    <property type="entry name" value="GTP 3',8-cyclase"/>
    <property type="match status" value="1"/>
</dbReference>
<dbReference type="Gene3D" id="3.20.20.70">
    <property type="entry name" value="Aldolase class I"/>
    <property type="match status" value="1"/>
</dbReference>
<dbReference type="HAMAP" id="MF_01225_B">
    <property type="entry name" value="MoaA_B"/>
    <property type="match status" value="1"/>
</dbReference>
<dbReference type="InterPro" id="IPR013785">
    <property type="entry name" value="Aldolase_TIM"/>
</dbReference>
<dbReference type="InterPro" id="IPR006638">
    <property type="entry name" value="Elp3/MiaA/NifB-like_rSAM"/>
</dbReference>
<dbReference type="InterPro" id="IPR013483">
    <property type="entry name" value="MoaA"/>
</dbReference>
<dbReference type="InterPro" id="IPR000385">
    <property type="entry name" value="MoaA_NifB_PqqE_Fe-S-bd_CS"/>
</dbReference>
<dbReference type="InterPro" id="IPR010505">
    <property type="entry name" value="MoaA_twitch"/>
</dbReference>
<dbReference type="InterPro" id="IPR050105">
    <property type="entry name" value="MoCo_biosynth_MoaA/MoaC"/>
</dbReference>
<dbReference type="InterPro" id="IPR007197">
    <property type="entry name" value="rSAM"/>
</dbReference>
<dbReference type="NCBIfam" id="TIGR02666">
    <property type="entry name" value="moaA"/>
    <property type="match status" value="1"/>
</dbReference>
<dbReference type="PANTHER" id="PTHR22960:SF28">
    <property type="entry name" value="GTP 3',8-CYCLASE"/>
    <property type="match status" value="1"/>
</dbReference>
<dbReference type="PANTHER" id="PTHR22960">
    <property type="entry name" value="MOLYBDOPTERIN COFACTOR SYNTHESIS PROTEIN A"/>
    <property type="match status" value="1"/>
</dbReference>
<dbReference type="Pfam" id="PF13353">
    <property type="entry name" value="Fer4_12"/>
    <property type="match status" value="1"/>
</dbReference>
<dbReference type="Pfam" id="PF06463">
    <property type="entry name" value="Mob_synth_C"/>
    <property type="match status" value="1"/>
</dbReference>
<dbReference type="Pfam" id="PF04055">
    <property type="entry name" value="Radical_SAM"/>
    <property type="match status" value="1"/>
</dbReference>
<dbReference type="SFLD" id="SFLDG01383">
    <property type="entry name" value="cyclic_pyranopterin_phosphate"/>
    <property type="match status" value="1"/>
</dbReference>
<dbReference type="SFLD" id="SFLDG01067">
    <property type="entry name" value="SPASM/twitch_domain_containing"/>
    <property type="match status" value="1"/>
</dbReference>
<dbReference type="SMART" id="SM00729">
    <property type="entry name" value="Elp3"/>
    <property type="match status" value="1"/>
</dbReference>
<dbReference type="SUPFAM" id="SSF102114">
    <property type="entry name" value="Radical SAM enzymes"/>
    <property type="match status" value="1"/>
</dbReference>
<dbReference type="PROSITE" id="PS01305">
    <property type="entry name" value="MOAA_NIFB_PQQE"/>
    <property type="match status" value="1"/>
</dbReference>
<dbReference type="PROSITE" id="PS51918">
    <property type="entry name" value="RADICAL_SAM"/>
    <property type="match status" value="1"/>
</dbReference>
<evidence type="ECO:0000255" key="1">
    <source>
        <dbReference type="HAMAP-Rule" id="MF_01225"/>
    </source>
</evidence>
<evidence type="ECO:0000255" key="2">
    <source>
        <dbReference type="PROSITE-ProRule" id="PRU01266"/>
    </source>
</evidence>
<proteinExistence type="inferred from homology"/>